<reference key="1">
    <citation type="submission" date="2004-11" db="EMBL/GenBank/DDBJ databases">
        <authorList>
            <consortium name="The German cDNA consortium"/>
        </authorList>
    </citation>
    <scope>NUCLEOTIDE SEQUENCE [LARGE SCALE MRNA]</scope>
    <source>
        <tissue>Heart</tissue>
    </source>
</reference>
<protein>
    <recommendedName>
        <fullName>E3 ubiquitin-protein ligase RNF13</fullName>
        <ecNumber>2.3.2.27</ecNumber>
    </recommendedName>
    <alternativeName>
        <fullName>RING finger protein 13</fullName>
    </alternativeName>
</protein>
<keyword id="KW-0256">Endoplasmic reticulum</keyword>
<keyword id="KW-0967">Endosome</keyword>
<keyword id="KW-0325">Glycoprotein</keyword>
<keyword id="KW-0458">Lysosome</keyword>
<keyword id="KW-0472">Membrane</keyword>
<keyword id="KW-0479">Metal-binding</keyword>
<keyword id="KW-0539">Nucleus</keyword>
<keyword id="KW-1185">Reference proteome</keyword>
<keyword id="KW-0732">Signal</keyword>
<keyword id="KW-0808">Transferase</keyword>
<keyword id="KW-0812">Transmembrane</keyword>
<keyword id="KW-1133">Transmembrane helix</keyword>
<keyword id="KW-0832">Ubl conjugation</keyword>
<keyword id="KW-0833">Ubl conjugation pathway</keyword>
<keyword id="KW-0862">Zinc</keyword>
<keyword id="KW-0863">Zinc-finger</keyword>
<proteinExistence type="evidence at transcript level"/>
<feature type="signal peptide" evidence="3">
    <location>
        <begin position="1"/>
        <end position="34"/>
    </location>
</feature>
<feature type="chain" id="PRO_0000307368" description="E3 ubiquitin-protein ligase RNF13">
    <location>
        <begin position="35"/>
        <end position="381"/>
    </location>
</feature>
<feature type="topological domain" description="Lumenal" evidence="3">
    <location>
        <begin position="35"/>
        <end position="182"/>
    </location>
</feature>
<feature type="transmembrane region" description="Helical" evidence="3">
    <location>
        <begin position="183"/>
        <end position="203"/>
    </location>
</feature>
<feature type="topological domain" description="Cytoplasmic" evidence="3">
    <location>
        <begin position="204"/>
        <end position="381"/>
    </location>
</feature>
<feature type="domain" description="PA">
    <location>
        <begin position="65"/>
        <end position="160"/>
    </location>
</feature>
<feature type="zinc finger region" description="RING-type; atypical" evidence="4">
    <location>
        <begin position="240"/>
        <end position="282"/>
    </location>
</feature>
<feature type="region of interest" description="Disordered" evidence="5">
    <location>
        <begin position="285"/>
        <end position="381"/>
    </location>
</feature>
<feature type="compositionally biased region" description="Acidic residues" evidence="5">
    <location>
        <begin position="292"/>
        <end position="304"/>
    </location>
</feature>
<feature type="compositionally biased region" description="Acidic residues" evidence="5">
    <location>
        <begin position="339"/>
        <end position="357"/>
    </location>
</feature>
<feature type="glycosylation site" description="N-linked (GlcNAc...) asparagine" evidence="3">
    <location>
        <position position="88"/>
    </location>
</feature>
<evidence type="ECO:0000250" key="1">
    <source>
        <dbReference type="UniProtKB" id="O43567"/>
    </source>
</evidence>
<evidence type="ECO:0000250" key="2">
    <source>
        <dbReference type="UniProtKB" id="O54965"/>
    </source>
</evidence>
<evidence type="ECO:0000255" key="3"/>
<evidence type="ECO:0000255" key="4">
    <source>
        <dbReference type="PROSITE-ProRule" id="PRU00175"/>
    </source>
</evidence>
<evidence type="ECO:0000256" key="5">
    <source>
        <dbReference type="SAM" id="MobiDB-lite"/>
    </source>
</evidence>
<comment type="function">
    <text evidence="1">E3 ubiquitin-protein ligase that regulates cell proliferation. Involved in apoptosis regulation. Mediates ER stress-induced activation of JNK signaling pathway and apoptosis by promoting ERN1 activation and splicing of XBP1 mRNA. Also involved in protein trafficking and localization.</text>
</comment>
<comment type="catalytic activity">
    <reaction evidence="1">
        <text>S-ubiquitinyl-[E2 ubiquitin-conjugating enzyme]-L-cysteine + [acceptor protein]-L-lysine = [E2 ubiquitin-conjugating enzyme]-L-cysteine + N(6)-ubiquitinyl-[acceptor protein]-L-lysine.</text>
        <dbReference type="EC" id="2.3.2.27"/>
    </reaction>
</comment>
<comment type="pathway">
    <text evidence="1">Protein modification; protein ubiquitination.</text>
</comment>
<comment type="subunit">
    <text evidence="1">Interacts with ERN1.</text>
</comment>
<comment type="subcellular location">
    <subcellularLocation>
        <location evidence="1">Endoplasmic reticulum membrane</location>
        <topology evidence="3">Single-pass type I membrane protein</topology>
    </subcellularLocation>
    <subcellularLocation>
        <location evidence="2">Late endosome membrane</location>
        <topology evidence="3">Single-pass type I membrane protein</topology>
    </subcellularLocation>
    <subcellularLocation>
        <location evidence="1">Lysosome membrane</location>
        <topology evidence="3">Single-pass type I membrane protein</topology>
    </subcellularLocation>
    <subcellularLocation>
        <location evidence="2">Nucleus inner membrane</location>
        <topology evidence="3">Single-pass type I membrane protein</topology>
    </subcellularLocation>
    <text evidence="2">Under certain conditions, relocalizes to recycling endosomes and to the inner nuclear membrane.</text>
</comment>
<comment type="domain">
    <text evidence="1">The RING-type zinc finger domain is required for E3 ligase activity and for promoting ER stress-induced JNK activation and apoptosis.</text>
</comment>
<comment type="PTM">
    <text evidence="1">Autoubiquitinated.</text>
</comment>
<dbReference type="EC" id="2.3.2.27"/>
<dbReference type="EMBL" id="CR858160">
    <property type="protein sequence ID" value="CAH90399.1"/>
    <property type="molecule type" value="mRNA"/>
</dbReference>
<dbReference type="RefSeq" id="NP_001125196.1">
    <property type="nucleotide sequence ID" value="NM_001131724.1"/>
</dbReference>
<dbReference type="SMR" id="Q5RCV8"/>
<dbReference type="FunCoup" id="Q5RCV8">
    <property type="interactions" value="3778"/>
</dbReference>
<dbReference type="STRING" id="9601.ENSPPYP00000015882"/>
<dbReference type="GlyCosmos" id="Q5RCV8">
    <property type="glycosylation" value="1 site, No reported glycans"/>
</dbReference>
<dbReference type="Ensembl" id="ENSPPYT00000016511.3">
    <property type="protein sequence ID" value="ENSPPYP00000015882.3"/>
    <property type="gene ID" value="ENSPPYG00000014202.3"/>
</dbReference>
<dbReference type="GeneID" id="100172087"/>
<dbReference type="KEGG" id="pon:100172087"/>
<dbReference type="CTD" id="11342"/>
<dbReference type="eggNOG" id="KOG4628">
    <property type="taxonomic scope" value="Eukaryota"/>
</dbReference>
<dbReference type="GeneTree" id="ENSGT00940000154942"/>
<dbReference type="InParanoid" id="Q5RCV8"/>
<dbReference type="OMA" id="VYTIFTV"/>
<dbReference type="OrthoDB" id="8062037at2759"/>
<dbReference type="UniPathway" id="UPA00143"/>
<dbReference type="Proteomes" id="UP000001595">
    <property type="component" value="Chromosome 3"/>
</dbReference>
<dbReference type="GO" id="GO:0005829">
    <property type="term" value="C:cytosol"/>
    <property type="evidence" value="ECO:0007669"/>
    <property type="project" value="Ensembl"/>
</dbReference>
<dbReference type="GO" id="GO:0005783">
    <property type="term" value="C:endoplasmic reticulum"/>
    <property type="evidence" value="ECO:0000250"/>
    <property type="project" value="UniProtKB"/>
</dbReference>
<dbReference type="GO" id="GO:0005789">
    <property type="term" value="C:endoplasmic reticulum membrane"/>
    <property type="evidence" value="ECO:0007669"/>
    <property type="project" value="UniProtKB-SubCell"/>
</dbReference>
<dbReference type="GO" id="GO:0031902">
    <property type="term" value="C:late endosome membrane"/>
    <property type="evidence" value="ECO:0000250"/>
    <property type="project" value="UniProtKB"/>
</dbReference>
<dbReference type="GO" id="GO:0005765">
    <property type="term" value="C:lysosomal membrane"/>
    <property type="evidence" value="ECO:0000250"/>
    <property type="project" value="UniProtKB"/>
</dbReference>
<dbReference type="GO" id="GO:0005637">
    <property type="term" value="C:nuclear inner membrane"/>
    <property type="evidence" value="ECO:0007669"/>
    <property type="project" value="UniProtKB-SubCell"/>
</dbReference>
<dbReference type="GO" id="GO:0005654">
    <property type="term" value="C:nucleoplasm"/>
    <property type="evidence" value="ECO:0007669"/>
    <property type="project" value="Ensembl"/>
</dbReference>
<dbReference type="GO" id="GO:0008432">
    <property type="term" value="F:JUN kinase binding"/>
    <property type="evidence" value="ECO:0000250"/>
    <property type="project" value="UniProtKB"/>
</dbReference>
<dbReference type="GO" id="GO:0061630">
    <property type="term" value="F:ubiquitin protein ligase activity"/>
    <property type="evidence" value="ECO:0007669"/>
    <property type="project" value="Ensembl"/>
</dbReference>
<dbReference type="GO" id="GO:0004842">
    <property type="term" value="F:ubiquitin-protein transferase activity"/>
    <property type="evidence" value="ECO:0000250"/>
    <property type="project" value="UniProtKB"/>
</dbReference>
<dbReference type="GO" id="GO:0008270">
    <property type="term" value="F:zinc ion binding"/>
    <property type="evidence" value="ECO:0007669"/>
    <property type="project" value="UniProtKB-KW"/>
</dbReference>
<dbReference type="GO" id="GO:0051640">
    <property type="term" value="P:organelle localization"/>
    <property type="evidence" value="ECO:0007669"/>
    <property type="project" value="Ensembl"/>
</dbReference>
<dbReference type="GO" id="GO:0046330">
    <property type="term" value="P:positive regulation of JNK cascade"/>
    <property type="evidence" value="ECO:0000250"/>
    <property type="project" value="UniProtKB"/>
</dbReference>
<dbReference type="GO" id="GO:0051865">
    <property type="term" value="P:protein autoubiquitination"/>
    <property type="evidence" value="ECO:0000250"/>
    <property type="project" value="UniProtKB"/>
</dbReference>
<dbReference type="CDD" id="cd02123">
    <property type="entry name" value="PA_C_RZF_like"/>
    <property type="match status" value="1"/>
</dbReference>
<dbReference type="CDD" id="cd16796">
    <property type="entry name" value="RING-H2_RNF13"/>
    <property type="match status" value="1"/>
</dbReference>
<dbReference type="FunFam" id="3.50.30.30:FF:000012">
    <property type="entry name" value="E3 ubiquitin-protein ligase RNF13"/>
    <property type="match status" value="1"/>
</dbReference>
<dbReference type="FunFam" id="3.30.40.10:FF:000099">
    <property type="entry name" value="E3 ubiquitin-protein ligase RNF167"/>
    <property type="match status" value="1"/>
</dbReference>
<dbReference type="Gene3D" id="3.50.30.30">
    <property type="match status" value="1"/>
</dbReference>
<dbReference type="Gene3D" id="3.30.40.10">
    <property type="entry name" value="Zinc/RING finger domain, C3HC4 (zinc finger)"/>
    <property type="match status" value="1"/>
</dbReference>
<dbReference type="InterPro" id="IPR051653">
    <property type="entry name" value="E3_ligase_sorting_rcpt"/>
</dbReference>
<dbReference type="InterPro" id="IPR046450">
    <property type="entry name" value="PA_dom_sf"/>
</dbReference>
<dbReference type="InterPro" id="IPR003137">
    <property type="entry name" value="PA_domain"/>
</dbReference>
<dbReference type="InterPro" id="IPR001841">
    <property type="entry name" value="Znf_RING"/>
</dbReference>
<dbReference type="InterPro" id="IPR013083">
    <property type="entry name" value="Znf_RING/FYVE/PHD"/>
</dbReference>
<dbReference type="InterPro" id="IPR044744">
    <property type="entry name" value="ZNRF4/RNF13/RNF167_PA"/>
</dbReference>
<dbReference type="PANTHER" id="PTHR47168:SF1">
    <property type="entry name" value="OS02G0798600 PROTEIN"/>
    <property type="match status" value="1"/>
</dbReference>
<dbReference type="PANTHER" id="PTHR47168">
    <property type="entry name" value="RING ZINC FINGER DOMAIN SUPERFAMILY PROTEIN-RELATED"/>
    <property type="match status" value="1"/>
</dbReference>
<dbReference type="Pfam" id="PF02225">
    <property type="entry name" value="PA"/>
    <property type="match status" value="1"/>
</dbReference>
<dbReference type="Pfam" id="PF13639">
    <property type="entry name" value="zf-RING_2"/>
    <property type="match status" value="1"/>
</dbReference>
<dbReference type="SMART" id="SM00184">
    <property type="entry name" value="RING"/>
    <property type="match status" value="1"/>
</dbReference>
<dbReference type="SUPFAM" id="SSF52025">
    <property type="entry name" value="PA domain"/>
    <property type="match status" value="1"/>
</dbReference>
<dbReference type="SUPFAM" id="SSF57850">
    <property type="entry name" value="RING/U-box"/>
    <property type="match status" value="1"/>
</dbReference>
<dbReference type="PROSITE" id="PS50089">
    <property type="entry name" value="ZF_RING_2"/>
    <property type="match status" value="1"/>
</dbReference>
<accession>Q5RCV8</accession>
<gene>
    <name type="primary">RNF13</name>
</gene>
<name>RNF13_PONAB</name>
<organism>
    <name type="scientific">Pongo abelii</name>
    <name type="common">Sumatran orangutan</name>
    <name type="synonym">Pongo pygmaeus abelii</name>
    <dbReference type="NCBI Taxonomy" id="9601"/>
    <lineage>
        <taxon>Eukaryota</taxon>
        <taxon>Metazoa</taxon>
        <taxon>Chordata</taxon>
        <taxon>Craniata</taxon>
        <taxon>Vertebrata</taxon>
        <taxon>Euteleostomi</taxon>
        <taxon>Mammalia</taxon>
        <taxon>Eutheria</taxon>
        <taxon>Euarchontoglires</taxon>
        <taxon>Primates</taxon>
        <taxon>Haplorrhini</taxon>
        <taxon>Catarrhini</taxon>
        <taxon>Hominidae</taxon>
        <taxon>Pongo</taxon>
    </lineage>
</organism>
<sequence>MLLSIGMLMLSATQVYTILTVQLFAFLNLLPVEADILAYNFENASQTFDDLPARFGYRLPAEGLKGFLINSKPENACEPIVPPPVKDNSSGTFIVLIRRLDCNFDIKVLNAQRAGYKAAIVHNVDSDDLISMGSNDIEVLKKIDIPSVFIGESSANSLKDEFTYEKGGHLILVPEFSLPLEYYLIPFLIIVGICLILIVIFMITKFVQDRHRARRNRLRKDQLKKLPVHKFKKGDEYDVCAICLDEYEDGDKLRILPCSHAYHCKCVDPWLTKTKKTCPVCKQKVVPSQGDSDSDTDSSQEENEVTEHTPLLRPLASVSAQSFGALSESRSHQNMTESSDYEEDDNEDTDSSDAENEINEHDVVVQLQPNGERDYNIANTV</sequence>